<sequence length="46" mass="5515">MRLHTGEKPYQCLHCDRHFVQVANLRRHLRVHTGERPYACEICPSR</sequence>
<protein>
    <recommendedName>
        <fullName>Protein krueppel</fullName>
    </recommendedName>
</protein>
<reference key="1">
    <citation type="journal article" date="1992" name="Proc. Natl. Acad. Sci. U.S.A.">
        <title>Evolutionary conservation pattern of zinc-finger domains of Drosophila segmentation genes.</title>
        <authorList>
            <person name="Sommer R.J."/>
            <person name="Retzlaff M."/>
            <person name="Goerlich K."/>
            <person name="Sander K."/>
            <person name="Tautz D."/>
        </authorList>
    </citation>
    <scope>NUCLEOTIDE SEQUENCE [GENOMIC DNA]</scope>
</reference>
<proteinExistence type="inferred from homology"/>
<keyword id="KW-0217">Developmental protein</keyword>
<keyword id="KW-0238">DNA-binding</keyword>
<keyword id="KW-0302">Gap protein</keyword>
<keyword id="KW-0479">Metal-binding</keyword>
<keyword id="KW-0539">Nucleus</keyword>
<keyword id="KW-0677">Repeat</keyword>
<keyword id="KW-0862">Zinc</keyword>
<keyword id="KW-0863">Zinc-finger</keyword>
<gene>
    <name type="primary">Kr</name>
</gene>
<organism>
    <name type="scientific">Pholcus phalangioides</name>
    <name type="common">Longbodied cellar spider</name>
    <name type="synonym">Aranea phalangioides</name>
    <dbReference type="NCBI Taxonomy" id="6932"/>
    <lineage>
        <taxon>Eukaryota</taxon>
        <taxon>Metazoa</taxon>
        <taxon>Ecdysozoa</taxon>
        <taxon>Arthropoda</taxon>
        <taxon>Chelicerata</taxon>
        <taxon>Arachnida</taxon>
        <taxon>Araneae</taxon>
        <taxon>Araneomorphae</taxon>
        <taxon>Haplogynae</taxon>
        <taxon>Pholcoidea</taxon>
        <taxon>Pholcidae</taxon>
        <taxon>Pholcus</taxon>
    </lineage>
</organism>
<comment type="function">
    <text>Krueppel is a gap class segmentation protein.</text>
</comment>
<comment type="subcellular location">
    <subcellularLocation>
        <location evidence="2">Nucleus</location>
    </subcellularLocation>
</comment>
<comment type="similarity">
    <text evidence="2">Belongs to the krueppel C2H2-type zinc-finger protein family.</text>
</comment>
<name>KRUP_PHOPA</name>
<accession>Q02034</accession>
<feature type="chain" id="PRO_0000046999" description="Protein krueppel">
    <location>
        <begin position="1" status="less than"/>
        <end position="46" status="greater than"/>
    </location>
</feature>
<feature type="zinc finger region" description="C2H2-type 1" evidence="1">
    <location>
        <begin position="1" status="less than"/>
        <end position="4"/>
    </location>
</feature>
<feature type="zinc finger region" description="C2H2-type 2" evidence="1">
    <location>
        <begin position="10"/>
        <end position="32"/>
    </location>
</feature>
<feature type="zinc finger region" description="C2H2-type 3" evidence="1">
    <location>
        <begin position="38"/>
        <end position="46" status="greater than"/>
    </location>
</feature>
<feature type="non-terminal residue">
    <location>
        <position position="1"/>
    </location>
</feature>
<feature type="non-terminal residue">
    <location>
        <position position="46"/>
    </location>
</feature>
<evidence type="ECO:0000255" key="1">
    <source>
        <dbReference type="PROSITE-ProRule" id="PRU00042"/>
    </source>
</evidence>
<evidence type="ECO:0000305" key="2"/>
<dbReference type="EMBL" id="L01605">
    <property type="protein sequence ID" value="AAA89211.1"/>
    <property type="molecule type" value="Genomic_DNA"/>
</dbReference>
<dbReference type="SMR" id="Q02034"/>
<dbReference type="GO" id="GO:0005634">
    <property type="term" value="C:nucleus"/>
    <property type="evidence" value="ECO:0007669"/>
    <property type="project" value="UniProtKB-SubCell"/>
</dbReference>
<dbReference type="GO" id="GO:0003677">
    <property type="term" value="F:DNA binding"/>
    <property type="evidence" value="ECO:0007669"/>
    <property type="project" value="UniProtKB-KW"/>
</dbReference>
<dbReference type="GO" id="GO:0008270">
    <property type="term" value="F:zinc ion binding"/>
    <property type="evidence" value="ECO:0007669"/>
    <property type="project" value="UniProtKB-KW"/>
</dbReference>
<dbReference type="GO" id="GO:0035282">
    <property type="term" value="P:segmentation"/>
    <property type="evidence" value="ECO:0007669"/>
    <property type="project" value="UniProtKB-KW"/>
</dbReference>
<dbReference type="FunFam" id="3.30.160.60:FF:001954">
    <property type="entry name" value="Zinc finger protein 787"/>
    <property type="match status" value="1"/>
</dbReference>
<dbReference type="Gene3D" id="3.30.160.60">
    <property type="entry name" value="Classic Zinc Finger"/>
    <property type="match status" value="2"/>
</dbReference>
<dbReference type="InterPro" id="IPR036236">
    <property type="entry name" value="Znf_C2H2_sf"/>
</dbReference>
<dbReference type="InterPro" id="IPR013087">
    <property type="entry name" value="Znf_C2H2_type"/>
</dbReference>
<dbReference type="PANTHER" id="PTHR23235">
    <property type="entry name" value="KRUEPPEL-LIKE TRANSCRIPTION FACTOR"/>
    <property type="match status" value="1"/>
</dbReference>
<dbReference type="Pfam" id="PF00096">
    <property type="entry name" value="zf-C2H2"/>
    <property type="match status" value="1"/>
</dbReference>
<dbReference type="SMART" id="SM00355">
    <property type="entry name" value="ZnF_C2H2"/>
    <property type="match status" value="1"/>
</dbReference>
<dbReference type="SUPFAM" id="SSF57667">
    <property type="entry name" value="beta-beta-alpha zinc fingers"/>
    <property type="match status" value="1"/>
</dbReference>
<dbReference type="PROSITE" id="PS00028">
    <property type="entry name" value="ZINC_FINGER_C2H2_1"/>
    <property type="match status" value="1"/>
</dbReference>
<dbReference type="PROSITE" id="PS50157">
    <property type="entry name" value="ZINC_FINGER_C2H2_2"/>
    <property type="match status" value="1"/>
</dbReference>